<proteinExistence type="inferred from homology"/>
<protein>
    <recommendedName>
        <fullName evidence="1">Lipoyl synthase</fullName>
        <ecNumber evidence="1">2.8.1.8</ecNumber>
    </recommendedName>
    <alternativeName>
        <fullName evidence="1">Lip-syn</fullName>
        <shortName evidence="1">LS</shortName>
    </alternativeName>
    <alternativeName>
        <fullName evidence="1">Lipoate synthase</fullName>
    </alternativeName>
    <alternativeName>
        <fullName evidence="1">Lipoic acid synthase</fullName>
    </alternativeName>
    <alternativeName>
        <fullName evidence="1">Sulfur insertion protein LipA</fullName>
    </alternativeName>
</protein>
<accession>Q2GGX7</accession>
<dbReference type="EC" id="2.8.1.8" evidence="1"/>
<dbReference type="EMBL" id="CP000236">
    <property type="protein sequence ID" value="ABD44699.1"/>
    <property type="molecule type" value="Genomic_DNA"/>
</dbReference>
<dbReference type="RefSeq" id="WP_011452636.1">
    <property type="nucleotide sequence ID" value="NC_007799.1"/>
</dbReference>
<dbReference type="SMR" id="Q2GGX7"/>
<dbReference type="STRING" id="205920.ECH_0490"/>
<dbReference type="KEGG" id="ech:ECH_0490"/>
<dbReference type="eggNOG" id="COG0320">
    <property type="taxonomic scope" value="Bacteria"/>
</dbReference>
<dbReference type="HOGENOM" id="CLU_033144_2_1_5"/>
<dbReference type="OrthoDB" id="9787898at2"/>
<dbReference type="UniPathway" id="UPA00538">
    <property type="reaction ID" value="UER00593"/>
</dbReference>
<dbReference type="Proteomes" id="UP000008320">
    <property type="component" value="Chromosome"/>
</dbReference>
<dbReference type="GO" id="GO:0005737">
    <property type="term" value="C:cytoplasm"/>
    <property type="evidence" value="ECO:0007669"/>
    <property type="project" value="UniProtKB-SubCell"/>
</dbReference>
<dbReference type="GO" id="GO:0051539">
    <property type="term" value="F:4 iron, 4 sulfur cluster binding"/>
    <property type="evidence" value="ECO:0007669"/>
    <property type="project" value="UniProtKB-UniRule"/>
</dbReference>
<dbReference type="GO" id="GO:0016992">
    <property type="term" value="F:lipoate synthase activity"/>
    <property type="evidence" value="ECO:0007669"/>
    <property type="project" value="UniProtKB-UniRule"/>
</dbReference>
<dbReference type="GO" id="GO:0046872">
    <property type="term" value="F:metal ion binding"/>
    <property type="evidence" value="ECO:0007669"/>
    <property type="project" value="UniProtKB-KW"/>
</dbReference>
<dbReference type="CDD" id="cd01335">
    <property type="entry name" value="Radical_SAM"/>
    <property type="match status" value="1"/>
</dbReference>
<dbReference type="FunFam" id="3.20.20.70:FF:000040">
    <property type="entry name" value="Lipoyl synthase"/>
    <property type="match status" value="1"/>
</dbReference>
<dbReference type="Gene3D" id="3.20.20.70">
    <property type="entry name" value="Aldolase class I"/>
    <property type="match status" value="1"/>
</dbReference>
<dbReference type="HAMAP" id="MF_00206">
    <property type="entry name" value="Lipoyl_synth"/>
    <property type="match status" value="1"/>
</dbReference>
<dbReference type="InterPro" id="IPR013785">
    <property type="entry name" value="Aldolase_TIM"/>
</dbReference>
<dbReference type="InterPro" id="IPR006638">
    <property type="entry name" value="Elp3/MiaA/NifB-like_rSAM"/>
</dbReference>
<dbReference type="InterPro" id="IPR031691">
    <property type="entry name" value="LIAS_N"/>
</dbReference>
<dbReference type="InterPro" id="IPR003698">
    <property type="entry name" value="Lipoyl_synth"/>
</dbReference>
<dbReference type="InterPro" id="IPR007197">
    <property type="entry name" value="rSAM"/>
</dbReference>
<dbReference type="NCBIfam" id="TIGR00510">
    <property type="entry name" value="lipA"/>
    <property type="match status" value="1"/>
</dbReference>
<dbReference type="NCBIfam" id="NF004019">
    <property type="entry name" value="PRK05481.1"/>
    <property type="match status" value="1"/>
</dbReference>
<dbReference type="NCBIfam" id="NF009544">
    <property type="entry name" value="PRK12928.1"/>
    <property type="match status" value="1"/>
</dbReference>
<dbReference type="PANTHER" id="PTHR10949">
    <property type="entry name" value="LIPOYL SYNTHASE"/>
    <property type="match status" value="1"/>
</dbReference>
<dbReference type="PANTHER" id="PTHR10949:SF0">
    <property type="entry name" value="LIPOYL SYNTHASE, MITOCHONDRIAL"/>
    <property type="match status" value="1"/>
</dbReference>
<dbReference type="Pfam" id="PF16881">
    <property type="entry name" value="LIAS_N"/>
    <property type="match status" value="1"/>
</dbReference>
<dbReference type="Pfam" id="PF04055">
    <property type="entry name" value="Radical_SAM"/>
    <property type="match status" value="1"/>
</dbReference>
<dbReference type="PIRSF" id="PIRSF005963">
    <property type="entry name" value="Lipoyl_synth"/>
    <property type="match status" value="1"/>
</dbReference>
<dbReference type="SFLD" id="SFLDF00271">
    <property type="entry name" value="lipoyl_synthase"/>
    <property type="match status" value="1"/>
</dbReference>
<dbReference type="SFLD" id="SFLDS00029">
    <property type="entry name" value="Radical_SAM"/>
    <property type="match status" value="1"/>
</dbReference>
<dbReference type="SMART" id="SM00729">
    <property type="entry name" value="Elp3"/>
    <property type="match status" value="1"/>
</dbReference>
<dbReference type="SUPFAM" id="SSF102114">
    <property type="entry name" value="Radical SAM enzymes"/>
    <property type="match status" value="1"/>
</dbReference>
<dbReference type="PROSITE" id="PS51918">
    <property type="entry name" value="RADICAL_SAM"/>
    <property type="match status" value="1"/>
</dbReference>
<name>LIPA_EHRCR</name>
<feature type="chain" id="PRO_1000012217" description="Lipoyl synthase">
    <location>
        <begin position="1"/>
        <end position="297"/>
    </location>
</feature>
<feature type="domain" description="Radical SAM core" evidence="2">
    <location>
        <begin position="46"/>
        <end position="262"/>
    </location>
</feature>
<feature type="binding site" evidence="1">
    <location>
        <position position="34"/>
    </location>
    <ligand>
        <name>[4Fe-4S] cluster</name>
        <dbReference type="ChEBI" id="CHEBI:49883"/>
        <label>1</label>
    </ligand>
</feature>
<feature type="binding site" evidence="1">
    <location>
        <position position="39"/>
    </location>
    <ligand>
        <name>[4Fe-4S] cluster</name>
        <dbReference type="ChEBI" id="CHEBI:49883"/>
        <label>1</label>
    </ligand>
</feature>
<feature type="binding site" evidence="1">
    <location>
        <position position="45"/>
    </location>
    <ligand>
        <name>[4Fe-4S] cluster</name>
        <dbReference type="ChEBI" id="CHEBI:49883"/>
        <label>1</label>
    </ligand>
</feature>
<feature type="binding site" evidence="1">
    <location>
        <position position="60"/>
    </location>
    <ligand>
        <name>[4Fe-4S] cluster</name>
        <dbReference type="ChEBI" id="CHEBI:49883"/>
        <label>2</label>
        <note>4Fe-4S-S-AdoMet</note>
    </ligand>
</feature>
<feature type="binding site" evidence="1">
    <location>
        <position position="64"/>
    </location>
    <ligand>
        <name>[4Fe-4S] cluster</name>
        <dbReference type="ChEBI" id="CHEBI:49883"/>
        <label>2</label>
        <note>4Fe-4S-S-AdoMet</note>
    </ligand>
</feature>
<feature type="binding site" evidence="1">
    <location>
        <position position="67"/>
    </location>
    <ligand>
        <name>[4Fe-4S] cluster</name>
        <dbReference type="ChEBI" id="CHEBI:49883"/>
        <label>2</label>
        <note>4Fe-4S-S-AdoMet</note>
    </ligand>
</feature>
<feature type="binding site" evidence="1">
    <location>
        <position position="273"/>
    </location>
    <ligand>
        <name>[4Fe-4S] cluster</name>
        <dbReference type="ChEBI" id="CHEBI:49883"/>
        <label>1</label>
    </ligand>
</feature>
<organism>
    <name type="scientific">Ehrlichia chaffeensis (strain ATCC CRL-10679 / Arkansas)</name>
    <dbReference type="NCBI Taxonomy" id="205920"/>
    <lineage>
        <taxon>Bacteria</taxon>
        <taxon>Pseudomonadati</taxon>
        <taxon>Pseudomonadota</taxon>
        <taxon>Alphaproteobacteria</taxon>
        <taxon>Rickettsiales</taxon>
        <taxon>Anaplasmataceae</taxon>
        <taxon>Ehrlichia</taxon>
    </lineage>
</organism>
<evidence type="ECO:0000255" key="1">
    <source>
        <dbReference type="HAMAP-Rule" id="MF_00206"/>
    </source>
</evidence>
<evidence type="ECO:0000255" key="2">
    <source>
        <dbReference type="PROSITE-ProRule" id="PRU01266"/>
    </source>
</evidence>
<comment type="function">
    <text evidence="1">Catalyzes the radical-mediated insertion of two sulfur atoms into the C-6 and C-8 positions of the octanoyl moiety bound to the lipoyl domains of lipoate-dependent enzymes, thereby converting the octanoylated domains into lipoylated derivatives.</text>
</comment>
<comment type="catalytic activity">
    <reaction evidence="1">
        <text>[[Fe-S] cluster scaffold protein carrying a second [4Fe-4S](2+) cluster] + N(6)-octanoyl-L-lysyl-[protein] + 2 oxidized [2Fe-2S]-[ferredoxin] + 2 S-adenosyl-L-methionine + 4 H(+) = [[Fe-S] cluster scaffold protein] + N(6)-[(R)-dihydrolipoyl]-L-lysyl-[protein] + 4 Fe(3+) + 2 hydrogen sulfide + 2 5'-deoxyadenosine + 2 L-methionine + 2 reduced [2Fe-2S]-[ferredoxin]</text>
        <dbReference type="Rhea" id="RHEA:16585"/>
        <dbReference type="Rhea" id="RHEA-COMP:9928"/>
        <dbReference type="Rhea" id="RHEA-COMP:10000"/>
        <dbReference type="Rhea" id="RHEA-COMP:10001"/>
        <dbReference type="Rhea" id="RHEA-COMP:10475"/>
        <dbReference type="Rhea" id="RHEA-COMP:14568"/>
        <dbReference type="Rhea" id="RHEA-COMP:14569"/>
        <dbReference type="ChEBI" id="CHEBI:15378"/>
        <dbReference type="ChEBI" id="CHEBI:17319"/>
        <dbReference type="ChEBI" id="CHEBI:29034"/>
        <dbReference type="ChEBI" id="CHEBI:29919"/>
        <dbReference type="ChEBI" id="CHEBI:33722"/>
        <dbReference type="ChEBI" id="CHEBI:33737"/>
        <dbReference type="ChEBI" id="CHEBI:33738"/>
        <dbReference type="ChEBI" id="CHEBI:57844"/>
        <dbReference type="ChEBI" id="CHEBI:59789"/>
        <dbReference type="ChEBI" id="CHEBI:78809"/>
        <dbReference type="ChEBI" id="CHEBI:83100"/>
        <dbReference type="EC" id="2.8.1.8"/>
    </reaction>
</comment>
<comment type="cofactor">
    <cofactor evidence="1">
        <name>[4Fe-4S] cluster</name>
        <dbReference type="ChEBI" id="CHEBI:49883"/>
    </cofactor>
    <text evidence="1">Binds 2 [4Fe-4S] clusters per subunit. One cluster is coordinated with 3 cysteines and an exchangeable S-adenosyl-L-methionine.</text>
</comment>
<comment type="pathway">
    <text evidence="1">Protein modification; protein lipoylation via endogenous pathway; protein N(6)-(lipoyl)lysine from octanoyl-[acyl-carrier-protein]: step 2/2.</text>
</comment>
<comment type="subcellular location">
    <subcellularLocation>
        <location evidence="1">Cytoplasm</location>
    </subcellularLocation>
</comment>
<comment type="similarity">
    <text evidence="1">Belongs to the radical SAM superfamily. Lipoyl synthase family.</text>
</comment>
<keyword id="KW-0004">4Fe-4S</keyword>
<keyword id="KW-0963">Cytoplasm</keyword>
<keyword id="KW-0408">Iron</keyword>
<keyword id="KW-0411">Iron-sulfur</keyword>
<keyword id="KW-0479">Metal-binding</keyword>
<keyword id="KW-1185">Reference proteome</keyword>
<keyword id="KW-0949">S-adenosyl-L-methionine</keyword>
<keyword id="KW-0808">Transferase</keyword>
<reference key="1">
    <citation type="journal article" date="2006" name="PLoS Genet.">
        <title>Comparative genomics of emerging human ehrlichiosis agents.</title>
        <authorList>
            <person name="Dunning Hotopp J.C."/>
            <person name="Lin M."/>
            <person name="Madupu R."/>
            <person name="Crabtree J."/>
            <person name="Angiuoli S.V."/>
            <person name="Eisen J.A."/>
            <person name="Seshadri R."/>
            <person name="Ren Q."/>
            <person name="Wu M."/>
            <person name="Utterback T.R."/>
            <person name="Smith S."/>
            <person name="Lewis M."/>
            <person name="Khouri H."/>
            <person name="Zhang C."/>
            <person name="Niu H."/>
            <person name="Lin Q."/>
            <person name="Ohashi N."/>
            <person name="Zhi N."/>
            <person name="Nelson W.C."/>
            <person name="Brinkac L.M."/>
            <person name="Dodson R.J."/>
            <person name="Rosovitz M.J."/>
            <person name="Sundaram J.P."/>
            <person name="Daugherty S.C."/>
            <person name="Davidsen T."/>
            <person name="Durkin A.S."/>
            <person name="Gwinn M.L."/>
            <person name="Haft D.H."/>
            <person name="Selengut J.D."/>
            <person name="Sullivan S.A."/>
            <person name="Zafar N."/>
            <person name="Zhou L."/>
            <person name="Benahmed F."/>
            <person name="Forberger H."/>
            <person name="Halpin R."/>
            <person name="Mulligan S."/>
            <person name="Robinson J."/>
            <person name="White O."/>
            <person name="Rikihisa Y."/>
            <person name="Tettelin H."/>
        </authorList>
    </citation>
    <scope>NUCLEOTIDE SEQUENCE [LARGE SCALE GENOMIC DNA]</scope>
    <source>
        <strain>ATCC CRL-10679 / Arkansas</strain>
    </source>
</reference>
<gene>
    <name evidence="1" type="primary">lipA</name>
    <name type="ordered locus">ECH_0490</name>
</gene>
<sequence>MRSKPDWLKVKMPTGDTFYQVRNLMKLYKLNTVCEEAACPNIGECWNKRHATVMILGSTCTRACAFCNVVSGIPDKLDPHEPQNLAKAVGLLKLEHVVITSVDRDDLEDGGSGHFVECIEEIRKNDQNVTIEVLTPDFLNKHGAIEKVADAAPDVYNHNIETVPRLYAKIRPKARYFHSLYLLKTVKYKNPKVFTKSGIMVGLGETKEEIYQVMNDLRSADVDFITIGQYLQPTPKHAAVDRYVTPEEFDHYKYVAYSKGFLMVASGPLVRSSYHAGEDFQRLKKNRAAMFMHAKSN</sequence>